<dbReference type="EC" id="4.98.1.1" evidence="1"/>
<dbReference type="EMBL" id="CP000304">
    <property type="protein sequence ID" value="ABP79642.1"/>
    <property type="molecule type" value="Genomic_DNA"/>
</dbReference>
<dbReference type="RefSeq" id="WP_011913112.1">
    <property type="nucleotide sequence ID" value="NC_009434.1"/>
</dbReference>
<dbReference type="SMR" id="A4VKZ1"/>
<dbReference type="KEGG" id="psa:PST_1968"/>
<dbReference type="eggNOG" id="COG0276">
    <property type="taxonomic scope" value="Bacteria"/>
</dbReference>
<dbReference type="HOGENOM" id="CLU_018884_0_1_6"/>
<dbReference type="UniPathway" id="UPA00252">
    <property type="reaction ID" value="UER00325"/>
</dbReference>
<dbReference type="Proteomes" id="UP000000233">
    <property type="component" value="Chromosome"/>
</dbReference>
<dbReference type="GO" id="GO:0005737">
    <property type="term" value="C:cytoplasm"/>
    <property type="evidence" value="ECO:0007669"/>
    <property type="project" value="UniProtKB-SubCell"/>
</dbReference>
<dbReference type="GO" id="GO:0004325">
    <property type="term" value="F:ferrochelatase activity"/>
    <property type="evidence" value="ECO:0007669"/>
    <property type="project" value="UniProtKB-UniRule"/>
</dbReference>
<dbReference type="GO" id="GO:0046872">
    <property type="term" value="F:metal ion binding"/>
    <property type="evidence" value="ECO:0007669"/>
    <property type="project" value="UniProtKB-KW"/>
</dbReference>
<dbReference type="GO" id="GO:0006783">
    <property type="term" value="P:heme biosynthetic process"/>
    <property type="evidence" value="ECO:0007669"/>
    <property type="project" value="UniProtKB-UniRule"/>
</dbReference>
<dbReference type="CDD" id="cd00419">
    <property type="entry name" value="Ferrochelatase_C"/>
    <property type="match status" value="1"/>
</dbReference>
<dbReference type="CDD" id="cd03411">
    <property type="entry name" value="Ferrochelatase_N"/>
    <property type="match status" value="1"/>
</dbReference>
<dbReference type="Gene3D" id="3.40.50.1400">
    <property type="match status" value="2"/>
</dbReference>
<dbReference type="HAMAP" id="MF_00323">
    <property type="entry name" value="Ferrochelatase"/>
    <property type="match status" value="1"/>
</dbReference>
<dbReference type="InterPro" id="IPR001015">
    <property type="entry name" value="Ferrochelatase"/>
</dbReference>
<dbReference type="InterPro" id="IPR033644">
    <property type="entry name" value="Ferrochelatase_C"/>
</dbReference>
<dbReference type="InterPro" id="IPR033659">
    <property type="entry name" value="Ferrochelatase_N"/>
</dbReference>
<dbReference type="NCBIfam" id="TIGR00109">
    <property type="entry name" value="hemH"/>
    <property type="match status" value="1"/>
</dbReference>
<dbReference type="PANTHER" id="PTHR11108">
    <property type="entry name" value="FERROCHELATASE"/>
    <property type="match status" value="1"/>
</dbReference>
<dbReference type="PANTHER" id="PTHR11108:SF1">
    <property type="entry name" value="FERROCHELATASE, MITOCHONDRIAL"/>
    <property type="match status" value="1"/>
</dbReference>
<dbReference type="Pfam" id="PF00762">
    <property type="entry name" value="Ferrochelatase"/>
    <property type="match status" value="1"/>
</dbReference>
<dbReference type="SUPFAM" id="SSF53800">
    <property type="entry name" value="Chelatase"/>
    <property type="match status" value="1"/>
</dbReference>
<organism>
    <name type="scientific">Stutzerimonas stutzeri (strain A1501)</name>
    <name type="common">Pseudomonas stutzeri</name>
    <dbReference type="NCBI Taxonomy" id="379731"/>
    <lineage>
        <taxon>Bacteria</taxon>
        <taxon>Pseudomonadati</taxon>
        <taxon>Pseudomonadota</taxon>
        <taxon>Gammaproteobacteria</taxon>
        <taxon>Pseudomonadales</taxon>
        <taxon>Pseudomonadaceae</taxon>
        <taxon>Stutzerimonas</taxon>
    </lineage>
</organism>
<proteinExistence type="inferred from homology"/>
<evidence type="ECO:0000255" key="1">
    <source>
        <dbReference type="HAMAP-Rule" id="MF_00323"/>
    </source>
</evidence>
<keyword id="KW-0963">Cytoplasm</keyword>
<keyword id="KW-0350">Heme biosynthesis</keyword>
<keyword id="KW-0408">Iron</keyword>
<keyword id="KW-0456">Lyase</keyword>
<keyword id="KW-0479">Metal-binding</keyword>
<keyword id="KW-0627">Porphyrin biosynthesis</keyword>
<keyword id="KW-1185">Reference proteome</keyword>
<sequence>MTEQALLLVNLGSPASTEVADVRRYLNQFLMDPYVVDLPWPLRRLLVSMILIKRPEQSAHAYASIWWPEGSPLVVLSRRLQEAVKPHWTKGPVELAMRYGEPSIEGALKRLAGQGITQVALAPLYPQFADSTTTTVIQEARRVIREHGLDLKLSILQPFYDQPEYLDALVASAMPHLQQGFDHLLLSFHGLPERHLHKSDPTGAHCLKGDDCCQRAEGAVLATCYRAQCIRTAEGFATRAGLRRDQWSVSFQSRLGRAKWIEPYTETRLDELAEQGVKKLLVMCPAFVSDCIETLEEIGDRGREQFIEAGGQELVLVPCLNTHEDWVQALVQLCSRAPQAL</sequence>
<gene>
    <name evidence="1" type="primary">hemH</name>
    <name type="ordered locus">PST_1968</name>
</gene>
<feature type="chain" id="PRO_1000019352" description="Ferrochelatase">
    <location>
        <begin position="1"/>
        <end position="341"/>
    </location>
</feature>
<feature type="binding site" evidence="1">
    <location>
        <position position="189"/>
    </location>
    <ligand>
        <name>Fe cation</name>
        <dbReference type="ChEBI" id="CHEBI:24875"/>
    </ligand>
</feature>
<feature type="binding site" evidence="1">
    <location>
        <position position="293"/>
    </location>
    <ligand>
        <name>Fe cation</name>
        <dbReference type="ChEBI" id="CHEBI:24875"/>
    </ligand>
</feature>
<comment type="function">
    <text evidence="1">Catalyzes the ferrous insertion into protoporphyrin IX.</text>
</comment>
<comment type="catalytic activity">
    <reaction evidence="1">
        <text>heme b + 2 H(+) = protoporphyrin IX + Fe(2+)</text>
        <dbReference type="Rhea" id="RHEA:22584"/>
        <dbReference type="ChEBI" id="CHEBI:15378"/>
        <dbReference type="ChEBI" id="CHEBI:29033"/>
        <dbReference type="ChEBI" id="CHEBI:57306"/>
        <dbReference type="ChEBI" id="CHEBI:60344"/>
        <dbReference type="EC" id="4.98.1.1"/>
    </reaction>
</comment>
<comment type="pathway">
    <text evidence="1">Porphyrin-containing compound metabolism; protoheme biosynthesis; protoheme from protoporphyrin-IX: step 1/1.</text>
</comment>
<comment type="subcellular location">
    <subcellularLocation>
        <location evidence="1">Cytoplasm</location>
    </subcellularLocation>
</comment>
<comment type="similarity">
    <text evidence="1">Belongs to the ferrochelatase family.</text>
</comment>
<reference key="1">
    <citation type="journal article" date="2008" name="Proc. Natl. Acad. Sci. U.S.A.">
        <title>Nitrogen fixation island and rhizosphere competence traits in the genome of root-associated Pseudomonas stutzeri A1501.</title>
        <authorList>
            <person name="Yan Y."/>
            <person name="Yang J."/>
            <person name="Dou Y."/>
            <person name="Chen M."/>
            <person name="Ping S."/>
            <person name="Peng J."/>
            <person name="Lu W."/>
            <person name="Zhang W."/>
            <person name="Yao Z."/>
            <person name="Li H."/>
            <person name="Liu W."/>
            <person name="He S."/>
            <person name="Geng L."/>
            <person name="Zhang X."/>
            <person name="Yang F."/>
            <person name="Yu H."/>
            <person name="Zhan Y."/>
            <person name="Li D."/>
            <person name="Lin Z."/>
            <person name="Wang Y."/>
            <person name="Elmerich C."/>
            <person name="Lin M."/>
            <person name="Jin Q."/>
        </authorList>
    </citation>
    <scope>NUCLEOTIDE SEQUENCE [LARGE SCALE GENOMIC DNA]</scope>
    <source>
        <strain>A1501</strain>
    </source>
</reference>
<protein>
    <recommendedName>
        <fullName evidence="1">Ferrochelatase</fullName>
        <ecNumber evidence="1">4.98.1.1</ecNumber>
    </recommendedName>
    <alternativeName>
        <fullName evidence="1">Heme synthase</fullName>
    </alternativeName>
    <alternativeName>
        <fullName evidence="1">Protoheme ferro-lyase</fullName>
    </alternativeName>
</protein>
<accession>A4VKZ1</accession>
<name>HEMH_STUS1</name>